<gene>
    <name evidence="2" type="primary">tuf</name>
    <name type="ordered locus">A1C_05115</name>
</gene>
<evidence type="ECO:0000250" key="1"/>
<evidence type="ECO:0000255" key="2">
    <source>
        <dbReference type="HAMAP-Rule" id="MF_00118"/>
    </source>
</evidence>
<comment type="function">
    <text evidence="2">GTP hydrolase that promotes the GTP-dependent binding of aminoacyl-tRNA to the A-site of ribosomes during protein biosynthesis.</text>
</comment>
<comment type="catalytic activity">
    <reaction evidence="2">
        <text>GTP + H2O = GDP + phosphate + H(+)</text>
        <dbReference type="Rhea" id="RHEA:19669"/>
        <dbReference type="ChEBI" id="CHEBI:15377"/>
        <dbReference type="ChEBI" id="CHEBI:15378"/>
        <dbReference type="ChEBI" id="CHEBI:37565"/>
        <dbReference type="ChEBI" id="CHEBI:43474"/>
        <dbReference type="ChEBI" id="CHEBI:58189"/>
        <dbReference type="EC" id="3.6.5.3"/>
    </reaction>
    <physiologicalReaction direction="left-to-right" evidence="2">
        <dbReference type="Rhea" id="RHEA:19670"/>
    </physiologicalReaction>
</comment>
<comment type="subunit">
    <text evidence="2">Monomer.</text>
</comment>
<comment type="subcellular location">
    <subcellularLocation>
        <location evidence="2">Cytoplasm</location>
    </subcellularLocation>
</comment>
<comment type="similarity">
    <text evidence="2">Belongs to the TRAFAC class translation factor GTPase superfamily. Classic translation factor GTPase family. EF-Tu/EF-1A subfamily.</text>
</comment>
<reference key="1">
    <citation type="submission" date="2007-09" db="EMBL/GenBank/DDBJ databases">
        <title>Complete genome sequence of Rickettsia akari.</title>
        <authorList>
            <person name="Madan A."/>
            <person name="Fahey J."/>
            <person name="Helton E."/>
            <person name="Ketteman M."/>
            <person name="Madan A."/>
            <person name="Rodrigues S."/>
            <person name="Sanchez A."/>
            <person name="Whiting M."/>
            <person name="Dasch G."/>
            <person name="Eremeeva M."/>
        </authorList>
    </citation>
    <scope>NUCLEOTIDE SEQUENCE [LARGE SCALE GENOMIC DNA]</scope>
    <source>
        <strain>Hartford</strain>
    </source>
</reference>
<name>EFTU_RICAH</name>
<feature type="chain" id="PRO_1000015740" description="Elongation factor Tu">
    <location>
        <begin position="1"/>
        <end position="395"/>
    </location>
</feature>
<feature type="domain" description="tr-type G">
    <location>
        <begin position="10"/>
        <end position="204"/>
    </location>
</feature>
<feature type="region of interest" description="G1" evidence="1">
    <location>
        <begin position="19"/>
        <end position="26"/>
    </location>
</feature>
<feature type="region of interest" description="G2" evidence="1">
    <location>
        <begin position="60"/>
        <end position="64"/>
    </location>
</feature>
<feature type="region of interest" description="G3" evidence="1">
    <location>
        <begin position="81"/>
        <end position="84"/>
    </location>
</feature>
<feature type="region of interest" description="G4" evidence="1">
    <location>
        <begin position="136"/>
        <end position="139"/>
    </location>
</feature>
<feature type="region of interest" description="G5" evidence="1">
    <location>
        <begin position="174"/>
        <end position="176"/>
    </location>
</feature>
<feature type="binding site" evidence="2">
    <location>
        <begin position="19"/>
        <end position="26"/>
    </location>
    <ligand>
        <name>GTP</name>
        <dbReference type="ChEBI" id="CHEBI:37565"/>
    </ligand>
</feature>
<feature type="binding site" evidence="2">
    <location>
        <position position="26"/>
    </location>
    <ligand>
        <name>Mg(2+)</name>
        <dbReference type="ChEBI" id="CHEBI:18420"/>
    </ligand>
</feature>
<feature type="binding site" evidence="2">
    <location>
        <begin position="81"/>
        <end position="85"/>
    </location>
    <ligand>
        <name>GTP</name>
        <dbReference type="ChEBI" id="CHEBI:37565"/>
    </ligand>
</feature>
<feature type="binding site" evidence="2">
    <location>
        <begin position="136"/>
        <end position="139"/>
    </location>
    <ligand>
        <name>GTP</name>
        <dbReference type="ChEBI" id="CHEBI:37565"/>
    </ligand>
</feature>
<organism>
    <name type="scientific">Rickettsia akari (strain Hartford)</name>
    <dbReference type="NCBI Taxonomy" id="293614"/>
    <lineage>
        <taxon>Bacteria</taxon>
        <taxon>Pseudomonadati</taxon>
        <taxon>Pseudomonadota</taxon>
        <taxon>Alphaproteobacteria</taxon>
        <taxon>Rickettsiales</taxon>
        <taxon>Rickettsiaceae</taxon>
        <taxon>Rickettsieae</taxon>
        <taxon>Rickettsia</taxon>
        <taxon>spotted fever group</taxon>
    </lineage>
</organism>
<protein>
    <recommendedName>
        <fullName evidence="2">Elongation factor Tu</fullName>
        <shortName evidence="2">EF-Tu</shortName>
        <ecNumber evidence="2">3.6.5.3</ecNumber>
    </recommendedName>
</protein>
<dbReference type="EC" id="3.6.5.3" evidence="2"/>
<dbReference type="EMBL" id="CP000847">
    <property type="protein sequence ID" value="ABV75277.1"/>
    <property type="molecule type" value="Genomic_DNA"/>
</dbReference>
<dbReference type="RefSeq" id="WP_012149907.1">
    <property type="nucleotide sequence ID" value="NC_009881.1"/>
</dbReference>
<dbReference type="SMR" id="A8GPF2"/>
<dbReference type="STRING" id="293614.A1C_05115"/>
<dbReference type="KEGG" id="rak:A1C_05115"/>
<dbReference type="eggNOG" id="COG0050">
    <property type="taxonomic scope" value="Bacteria"/>
</dbReference>
<dbReference type="HOGENOM" id="CLU_007265_0_0_5"/>
<dbReference type="Proteomes" id="UP000006830">
    <property type="component" value="Chromosome"/>
</dbReference>
<dbReference type="GO" id="GO:0005737">
    <property type="term" value="C:cytoplasm"/>
    <property type="evidence" value="ECO:0007669"/>
    <property type="project" value="UniProtKB-SubCell"/>
</dbReference>
<dbReference type="GO" id="GO:0005525">
    <property type="term" value="F:GTP binding"/>
    <property type="evidence" value="ECO:0007669"/>
    <property type="project" value="UniProtKB-UniRule"/>
</dbReference>
<dbReference type="GO" id="GO:0003924">
    <property type="term" value="F:GTPase activity"/>
    <property type="evidence" value="ECO:0007669"/>
    <property type="project" value="InterPro"/>
</dbReference>
<dbReference type="GO" id="GO:0097216">
    <property type="term" value="F:guanosine tetraphosphate binding"/>
    <property type="evidence" value="ECO:0007669"/>
    <property type="project" value="UniProtKB-ARBA"/>
</dbReference>
<dbReference type="GO" id="GO:0003746">
    <property type="term" value="F:translation elongation factor activity"/>
    <property type="evidence" value="ECO:0007669"/>
    <property type="project" value="UniProtKB-UniRule"/>
</dbReference>
<dbReference type="CDD" id="cd01884">
    <property type="entry name" value="EF_Tu"/>
    <property type="match status" value="1"/>
</dbReference>
<dbReference type="CDD" id="cd03697">
    <property type="entry name" value="EFTU_II"/>
    <property type="match status" value="1"/>
</dbReference>
<dbReference type="CDD" id="cd03707">
    <property type="entry name" value="EFTU_III"/>
    <property type="match status" value="1"/>
</dbReference>
<dbReference type="FunFam" id="2.40.30.10:FF:000001">
    <property type="entry name" value="Elongation factor Tu"/>
    <property type="match status" value="1"/>
</dbReference>
<dbReference type="FunFam" id="3.40.50.300:FF:000003">
    <property type="entry name" value="Elongation factor Tu"/>
    <property type="match status" value="1"/>
</dbReference>
<dbReference type="Gene3D" id="3.40.50.300">
    <property type="entry name" value="P-loop containing nucleotide triphosphate hydrolases"/>
    <property type="match status" value="1"/>
</dbReference>
<dbReference type="Gene3D" id="2.40.30.10">
    <property type="entry name" value="Translation factors"/>
    <property type="match status" value="2"/>
</dbReference>
<dbReference type="HAMAP" id="MF_00118_B">
    <property type="entry name" value="EF_Tu_B"/>
    <property type="match status" value="1"/>
</dbReference>
<dbReference type="InterPro" id="IPR041709">
    <property type="entry name" value="EF-Tu_GTP-bd"/>
</dbReference>
<dbReference type="InterPro" id="IPR050055">
    <property type="entry name" value="EF-Tu_GTPase"/>
</dbReference>
<dbReference type="InterPro" id="IPR004161">
    <property type="entry name" value="EFTu-like_2"/>
</dbReference>
<dbReference type="InterPro" id="IPR033720">
    <property type="entry name" value="EFTU_2"/>
</dbReference>
<dbReference type="InterPro" id="IPR031157">
    <property type="entry name" value="G_TR_CS"/>
</dbReference>
<dbReference type="InterPro" id="IPR027417">
    <property type="entry name" value="P-loop_NTPase"/>
</dbReference>
<dbReference type="InterPro" id="IPR005225">
    <property type="entry name" value="Small_GTP-bd"/>
</dbReference>
<dbReference type="InterPro" id="IPR000795">
    <property type="entry name" value="T_Tr_GTP-bd_dom"/>
</dbReference>
<dbReference type="InterPro" id="IPR009000">
    <property type="entry name" value="Transl_B-barrel_sf"/>
</dbReference>
<dbReference type="InterPro" id="IPR009001">
    <property type="entry name" value="Transl_elong_EF1A/Init_IF2_C"/>
</dbReference>
<dbReference type="InterPro" id="IPR004541">
    <property type="entry name" value="Transl_elong_EFTu/EF1A_bac/org"/>
</dbReference>
<dbReference type="InterPro" id="IPR004160">
    <property type="entry name" value="Transl_elong_EFTu/EF1A_C"/>
</dbReference>
<dbReference type="NCBIfam" id="TIGR00485">
    <property type="entry name" value="EF-Tu"/>
    <property type="match status" value="1"/>
</dbReference>
<dbReference type="NCBIfam" id="NF000766">
    <property type="entry name" value="PRK00049.1"/>
    <property type="match status" value="1"/>
</dbReference>
<dbReference type="NCBIfam" id="NF009372">
    <property type="entry name" value="PRK12735.1"/>
    <property type="match status" value="1"/>
</dbReference>
<dbReference type="NCBIfam" id="NF009373">
    <property type="entry name" value="PRK12736.1"/>
    <property type="match status" value="1"/>
</dbReference>
<dbReference type="NCBIfam" id="TIGR00231">
    <property type="entry name" value="small_GTP"/>
    <property type="match status" value="1"/>
</dbReference>
<dbReference type="PANTHER" id="PTHR43721:SF22">
    <property type="entry name" value="ELONGATION FACTOR TU, MITOCHONDRIAL"/>
    <property type="match status" value="1"/>
</dbReference>
<dbReference type="PANTHER" id="PTHR43721">
    <property type="entry name" value="ELONGATION FACTOR TU-RELATED"/>
    <property type="match status" value="1"/>
</dbReference>
<dbReference type="Pfam" id="PF00009">
    <property type="entry name" value="GTP_EFTU"/>
    <property type="match status" value="1"/>
</dbReference>
<dbReference type="Pfam" id="PF03144">
    <property type="entry name" value="GTP_EFTU_D2"/>
    <property type="match status" value="1"/>
</dbReference>
<dbReference type="Pfam" id="PF03143">
    <property type="entry name" value="GTP_EFTU_D3"/>
    <property type="match status" value="1"/>
</dbReference>
<dbReference type="PRINTS" id="PR00315">
    <property type="entry name" value="ELONGATNFCT"/>
</dbReference>
<dbReference type="SUPFAM" id="SSF50465">
    <property type="entry name" value="EF-Tu/eEF-1alpha/eIF2-gamma C-terminal domain"/>
    <property type="match status" value="1"/>
</dbReference>
<dbReference type="SUPFAM" id="SSF52540">
    <property type="entry name" value="P-loop containing nucleoside triphosphate hydrolases"/>
    <property type="match status" value="1"/>
</dbReference>
<dbReference type="SUPFAM" id="SSF50447">
    <property type="entry name" value="Translation proteins"/>
    <property type="match status" value="1"/>
</dbReference>
<dbReference type="PROSITE" id="PS00301">
    <property type="entry name" value="G_TR_1"/>
    <property type="match status" value="1"/>
</dbReference>
<dbReference type="PROSITE" id="PS51722">
    <property type="entry name" value="G_TR_2"/>
    <property type="match status" value="1"/>
</dbReference>
<sequence length="395" mass="42890">MAKAKFERTKPHVNIGTIGHVDHGKTSLTAAITTVLAKTGGAKATAYDQIDAAPEEKERGITISTAHVEYETKNRHYAHVDCPGHADYIKNMITGAAQMDGAILVVSAADGPMLQTREHILLAKQVGVPAMVVFLNKVDVVDDPALLELVEMEVRDLLLQYGFPAYEVPIIKGSALQALAGKPEGEKAINELMDAVDNYIPHPVRATDKPFLMPIEDVFSISGRGTVVTGRVESGIIKVGEEVEIVGLKETQKTTCTGVEMFRKLLDEGQAGDNVGILLRGTKREEVERGQVLAKPGSIKPHDQFEAEVYVLSKEEGGRHTPFTNDYRPQFYFRTTDVTGTIKLPADKQMVMPGDNATTFTVELIKPIAMQQGSKFSIREGGKTVGAGVVTKINN</sequence>
<accession>A8GPF2</accession>
<proteinExistence type="inferred from homology"/>
<keyword id="KW-0963">Cytoplasm</keyword>
<keyword id="KW-0251">Elongation factor</keyword>
<keyword id="KW-0342">GTP-binding</keyword>
<keyword id="KW-0378">Hydrolase</keyword>
<keyword id="KW-0460">Magnesium</keyword>
<keyword id="KW-0479">Metal-binding</keyword>
<keyword id="KW-0547">Nucleotide-binding</keyword>
<keyword id="KW-0648">Protein biosynthesis</keyword>